<reference evidence="5" key="1">
    <citation type="journal article" date="2012" name="PLoS ONE">
        <title>Peptidomics of the agriculturally damaging larval stage of the cabbage root fly Delia radicum (Diptera: Anthomyiidae).</title>
        <authorList>
            <person name="Zoephel J."/>
            <person name="Reiher W."/>
            <person name="Rexer K.-H."/>
            <person name="Kahnt J."/>
            <person name="Wegener C."/>
        </authorList>
    </citation>
    <scope>PROTEIN SEQUENCE</scope>
    <scope>TISSUE SPECIFICITY</scope>
    <scope>DEVELOPMENTAL STAGE</scope>
    <scope>MASS SPECTROMETRY</scope>
    <scope>AMIDATION AT LEU-15</scope>
    <source>
        <tissue evidence="3">CNS</tissue>
    </source>
</reference>
<evidence type="ECO:0000250" key="1">
    <source>
        <dbReference type="UniProtKB" id="P41489"/>
    </source>
</evidence>
<evidence type="ECO:0000255" key="2"/>
<evidence type="ECO:0000269" key="3">
    <source>
    </source>
</evidence>
<evidence type="ECO:0000303" key="4">
    <source>
    </source>
</evidence>
<evidence type="ECO:0000305" key="5"/>
<name>PK1_DELRA</name>
<proteinExistence type="evidence at protein level"/>
<feature type="peptide" id="PRO_0000419730" description="CAPA-Pyrokinin" evidence="3">
    <location>
        <begin position="1"/>
        <end position="15"/>
    </location>
</feature>
<feature type="peptide" id="PRO_0000419731" description="CAPA-Pyrokinin(2-15)" evidence="3">
    <location>
        <begin position="2"/>
        <end position="15"/>
    </location>
</feature>
<feature type="modified residue" description="Leucine amide" evidence="3">
    <location>
        <position position="15"/>
    </location>
</feature>
<feature type="unsure residue" description="L or I" evidence="3">
    <location>
        <position position="15"/>
    </location>
</feature>
<organism>
    <name type="scientific">Delia radicum</name>
    <name type="common">Cabbage root fly</name>
    <name type="synonym">Anthomyia brassicae</name>
    <dbReference type="NCBI Taxonomy" id="30064"/>
    <lineage>
        <taxon>Eukaryota</taxon>
        <taxon>Metazoa</taxon>
        <taxon>Ecdysozoa</taxon>
        <taxon>Arthropoda</taxon>
        <taxon>Hexapoda</taxon>
        <taxon>Insecta</taxon>
        <taxon>Pterygota</taxon>
        <taxon>Neoptera</taxon>
        <taxon>Endopterygota</taxon>
        <taxon>Diptera</taxon>
        <taxon>Brachycera</taxon>
        <taxon>Muscomorpha</taxon>
        <taxon>Muscoidea</taxon>
        <taxon>Anthomyiidae</taxon>
        <taxon>Anthomyiinae</taxon>
        <taxon>Delia</taxon>
    </lineage>
</organism>
<dbReference type="GO" id="GO:0005576">
    <property type="term" value="C:extracellular region"/>
    <property type="evidence" value="ECO:0007669"/>
    <property type="project" value="UniProtKB-SubCell"/>
</dbReference>
<dbReference type="GO" id="GO:0005184">
    <property type="term" value="F:neuropeptide hormone activity"/>
    <property type="evidence" value="ECO:0007669"/>
    <property type="project" value="InterPro"/>
</dbReference>
<dbReference type="GO" id="GO:0007218">
    <property type="term" value="P:neuropeptide signaling pathway"/>
    <property type="evidence" value="ECO:0007669"/>
    <property type="project" value="UniProtKB-KW"/>
</dbReference>
<dbReference type="InterPro" id="IPR001484">
    <property type="entry name" value="Pyrokinin_CS"/>
</dbReference>
<dbReference type="PROSITE" id="PS00539">
    <property type="entry name" value="PYROKININ"/>
    <property type="match status" value="1"/>
</dbReference>
<accession>B3EWL1</accession>
<accession>B3EWL2</accession>
<sequence length="15" mass="1517">AGPSATTGVWFGPRL</sequence>
<keyword id="KW-0027">Amidation</keyword>
<keyword id="KW-0903">Direct protein sequencing</keyword>
<keyword id="KW-0527">Neuropeptide</keyword>
<keyword id="KW-0964">Secreted</keyword>
<protein>
    <recommendedName>
        <fullName evidence="4">CAPA-Pyrokinin</fullName>
        <shortName evidence="4">CAPA-PK</shortName>
    </recommendedName>
    <component>
        <recommendedName>
            <fullName evidence="4">CAPA-Pyrokinin(2-15)</fullName>
            <shortName evidence="4">CAPA-PK(2-15)</shortName>
        </recommendedName>
    </component>
</protein>
<comment type="function">
    <text evidence="1">Mediates visceral muscle contractile activity (myotropic activity).</text>
</comment>
<comment type="subcellular location">
    <subcellularLocation>
        <location evidence="1">Secreted</location>
    </subcellularLocation>
</comment>
<comment type="tissue specificity">
    <text evidence="3">Both CAPA-pyrokinin and CAPA-pyrokinin(2-15) are expressed in CNS, ring gland and abdominal perisympathetic organs (aPSO) but not in midgut or thoracic perisympathetic organs (tPSO) (at protein level).</text>
</comment>
<comment type="developmental stage">
    <text evidence="3">Detected in larvae.</text>
</comment>
<comment type="mass spectrometry" mass="1515.81" method="MALDI" evidence="3">
    <molecule>CAPA-Pyrokinin</molecule>
</comment>
<comment type="mass spectrometry" mass="1444.78" method="MALDI" evidence="3">
    <molecule>CAPA-Pyrokinin(2-15)</molecule>
</comment>
<comment type="similarity">
    <text evidence="2">Belongs to the pyrokinin family.</text>
</comment>